<proteinExistence type="inferred from homology"/>
<dbReference type="EC" id="2.7.7.56" evidence="1"/>
<dbReference type="EMBL" id="AE004439">
    <property type="protein sequence ID" value="AAK03960.1"/>
    <property type="molecule type" value="Genomic_DNA"/>
</dbReference>
<dbReference type="RefSeq" id="WP_005724954.1">
    <property type="nucleotide sequence ID" value="NC_002663.1"/>
</dbReference>
<dbReference type="SMR" id="Q9CJW5"/>
<dbReference type="STRING" id="272843.PM1876"/>
<dbReference type="EnsemblBacteria" id="AAK03960">
    <property type="protein sequence ID" value="AAK03960"/>
    <property type="gene ID" value="PM1876"/>
</dbReference>
<dbReference type="GeneID" id="77207220"/>
<dbReference type="KEGG" id="pmu:PM1876"/>
<dbReference type="HOGENOM" id="CLU_050858_0_0_6"/>
<dbReference type="OrthoDB" id="9802265at2"/>
<dbReference type="Proteomes" id="UP000000809">
    <property type="component" value="Chromosome"/>
</dbReference>
<dbReference type="GO" id="GO:0000175">
    <property type="term" value="F:3'-5'-RNA exonuclease activity"/>
    <property type="evidence" value="ECO:0007669"/>
    <property type="project" value="UniProtKB-UniRule"/>
</dbReference>
<dbReference type="GO" id="GO:0000049">
    <property type="term" value="F:tRNA binding"/>
    <property type="evidence" value="ECO:0007669"/>
    <property type="project" value="UniProtKB-UniRule"/>
</dbReference>
<dbReference type="GO" id="GO:0009022">
    <property type="term" value="F:tRNA nucleotidyltransferase activity"/>
    <property type="evidence" value="ECO:0007669"/>
    <property type="project" value="UniProtKB-UniRule"/>
</dbReference>
<dbReference type="GO" id="GO:0016075">
    <property type="term" value="P:rRNA catabolic process"/>
    <property type="evidence" value="ECO:0007669"/>
    <property type="project" value="UniProtKB-UniRule"/>
</dbReference>
<dbReference type="GO" id="GO:0006364">
    <property type="term" value="P:rRNA processing"/>
    <property type="evidence" value="ECO:0007669"/>
    <property type="project" value="UniProtKB-KW"/>
</dbReference>
<dbReference type="GO" id="GO:0008033">
    <property type="term" value="P:tRNA processing"/>
    <property type="evidence" value="ECO:0007669"/>
    <property type="project" value="UniProtKB-UniRule"/>
</dbReference>
<dbReference type="CDD" id="cd11362">
    <property type="entry name" value="RNase_PH_bact"/>
    <property type="match status" value="1"/>
</dbReference>
<dbReference type="FunFam" id="3.30.230.70:FF:000003">
    <property type="entry name" value="Ribonuclease PH"/>
    <property type="match status" value="1"/>
</dbReference>
<dbReference type="Gene3D" id="3.30.230.70">
    <property type="entry name" value="GHMP Kinase, N-terminal domain"/>
    <property type="match status" value="1"/>
</dbReference>
<dbReference type="HAMAP" id="MF_00564">
    <property type="entry name" value="RNase_PH"/>
    <property type="match status" value="1"/>
</dbReference>
<dbReference type="InterPro" id="IPR001247">
    <property type="entry name" value="ExoRNase_PH_dom1"/>
</dbReference>
<dbReference type="InterPro" id="IPR015847">
    <property type="entry name" value="ExoRNase_PH_dom2"/>
</dbReference>
<dbReference type="InterPro" id="IPR036345">
    <property type="entry name" value="ExoRNase_PH_dom2_sf"/>
</dbReference>
<dbReference type="InterPro" id="IPR027408">
    <property type="entry name" value="PNPase/RNase_PH_dom_sf"/>
</dbReference>
<dbReference type="InterPro" id="IPR020568">
    <property type="entry name" value="Ribosomal_Su5_D2-typ_SF"/>
</dbReference>
<dbReference type="InterPro" id="IPR050080">
    <property type="entry name" value="RNase_PH"/>
</dbReference>
<dbReference type="InterPro" id="IPR002381">
    <property type="entry name" value="RNase_PH_bac-type"/>
</dbReference>
<dbReference type="InterPro" id="IPR018336">
    <property type="entry name" value="RNase_PH_CS"/>
</dbReference>
<dbReference type="NCBIfam" id="TIGR01966">
    <property type="entry name" value="RNasePH"/>
    <property type="match status" value="1"/>
</dbReference>
<dbReference type="PANTHER" id="PTHR11953">
    <property type="entry name" value="EXOSOME COMPLEX COMPONENT"/>
    <property type="match status" value="1"/>
</dbReference>
<dbReference type="PANTHER" id="PTHR11953:SF0">
    <property type="entry name" value="EXOSOME COMPLEX COMPONENT RRP41"/>
    <property type="match status" value="1"/>
</dbReference>
<dbReference type="Pfam" id="PF01138">
    <property type="entry name" value="RNase_PH"/>
    <property type="match status" value="1"/>
</dbReference>
<dbReference type="Pfam" id="PF03725">
    <property type="entry name" value="RNase_PH_C"/>
    <property type="match status" value="1"/>
</dbReference>
<dbReference type="SUPFAM" id="SSF55666">
    <property type="entry name" value="Ribonuclease PH domain 2-like"/>
    <property type="match status" value="1"/>
</dbReference>
<dbReference type="SUPFAM" id="SSF54211">
    <property type="entry name" value="Ribosomal protein S5 domain 2-like"/>
    <property type="match status" value="1"/>
</dbReference>
<dbReference type="PROSITE" id="PS01277">
    <property type="entry name" value="RIBONUCLEASE_PH"/>
    <property type="match status" value="1"/>
</dbReference>
<keyword id="KW-0548">Nucleotidyltransferase</keyword>
<keyword id="KW-1185">Reference proteome</keyword>
<keyword id="KW-0694">RNA-binding</keyword>
<keyword id="KW-0698">rRNA processing</keyword>
<keyword id="KW-0808">Transferase</keyword>
<keyword id="KW-0819">tRNA processing</keyword>
<keyword id="KW-0820">tRNA-binding</keyword>
<organism>
    <name type="scientific">Pasteurella multocida (strain Pm70)</name>
    <dbReference type="NCBI Taxonomy" id="272843"/>
    <lineage>
        <taxon>Bacteria</taxon>
        <taxon>Pseudomonadati</taxon>
        <taxon>Pseudomonadota</taxon>
        <taxon>Gammaproteobacteria</taxon>
        <taxon>Pasteurellales</taxon>
        <taxon>Pasteurellaceae</taxon>
        <taxon>Pasteurella</taxon>
    </lineage>
</organism>
<gene>
    <name evidence="1" type="primary">rph</name>
    <name type="ordered locus">PM1876</name>
</gene>
<name>RNPH_PASMU</name>
<reference key="1">
    <citation type="journal article" date="2001" name="Proc. Natl. Acad. Sci. U.S.A.">
        <title>Complete genomic sequence of Pasteurella multocida Pm70.</title>
        <authorList>
            <person name="May B.J."/>
            <person name="Zhang Q."/>
            <person name="Li L.L."/>
            <person name="Paustian M.L."/>
            <person name="Whittam T.S."/>
            <person name="Kapur V."/>
        </authorList>
    </citation>
    <scope>NUCLEOTIDE SEQUENCE [LARGE SCALE GENOMIC DNA]</scope>
    <source>
        <strain>Pm70</strain>
    </source>
</reference>
<comment type="function">
    <text evidence="1">Phosphorolytic 3'-5' exoribonuclease that plays an important role in tRNA 3'-end maturation. Removes nucleotide residues following the 3'-CCA terminus of tRNAs; can also add nucleotides to the ends of RNA molecules by using nucleoside diphosphates as substrates, but this may not be physiologically important. Probably plays a role in initiation of 16S rRNA degradation (leading to ribosome degradation) during starvation.</text>
</comment>
<comment type="catalytic activity">
    <reaction evidence="1">
        <text>tRNA(n+1) + phosphate = tRNA(n) + a ribonucleoside 5'-diphosphate</text>
        <dbReference type="Rhea" id="RHEA:10628"/>
        <dbReference type="Rhea" id="RHEA-COMP:17343"/>
        <dbReference type="Rhea" id="RHEA-COMP:17344"/>
        <dbReference type="ChEBI" id="CHEBI:43474"/>
        <dbReference type="ChEBI" id="CHEBI:57930"/>
        <dbReference type="ChEBI" id="CHEBI:173114"/>
        <dbReference type="EC" id="2.7.7.56"/>
    </reaction>
</comment>
<comment type="subunit">
    <text evidence="1">Homohexameric ring arranged as a trimer of dimers.</text>
</comment>
<comment type="similarity">
    <text evidence="1">Belongs to the RNase PH family.</text>
</comment>
<feature type="chain" id="PRO_0000139919" description="Ribonuclease PH">
    <location>
        <begin position="1"/>
        <end position="238"/>
    </location>
</feature>
<feature type="binding site" evidence="1">
    <location>
        <position position="86"/>
    </location>
    <ligand>
        <name>phosphate</name>
        <dbReference type="ChEBI" id="CHEBI:43474"/>
        <note>substrate</note>
    </ligand>
</feature>
<feature type="binding site" evidence="1">
    <location>
        <begin position="124"/>
        <end position="126"/>
    </location>
    <ligand>
        <name>phosphate</name>
        <dbReference type="ChEBI" id="CHEBI:43474"/>
        <note>substrate</note>
    </ligand>
</feature>
<sequence length="238" mass="25903">MRPNERANNQPRPIKITRHYTKHAEGSVLVEFGDTKVLCTATVEESVPRFLKGQNQGWVTAEYGMLPRSTHSRMQREAAKGKQGGRTLEIQRLIARSLRAMVDLEALGERSITLDCDVIQADGGTRTASITGACVALCDAIHGLVENGTLKVNPIKSLVAAISVGIVEGVPVCDLEYVEDSAAETDMNVVMMEDGRMIEVQGTAEGEPFSHEELLTLLALAKEGCQLIFDVQRQALAK</sequence>
<protein>
    <recommendedName>
        <fullName evidence="1">Ribonuclease PH</fullName>
        <shortName evidence="1">RNase PH</shortName>
        <ecNumber evidence="1">2.7.7.56</ecNumber>
    </recommendedName>
    <alternativeName>
        <fullName evidence="1">tRNA nucleotidyltransferase</fullName>
    </alternativeName>
</protein>
<evidence type="ECO:0000255" key="1">
    <source>
        <dbReference type="HAMAP-Rule" id="MF_00564"/>
    </source>
</evidence>
<accession>Q9CJW5</accession>